<organism>
    <name type="scientific">Pseudomonas putida (strain ATCC 700007 / DSM 6899 / JCM 31910 / BCRC 17059 / LMG 24140 / F1)</name>
    <dbReference type="NCBI Taxonomy" id="351746"/>
    <lineage>
        <taxon>Bacteria</taxon>
        <taxon>Pseudomonadati</taxon>
        <taxon>Pseudomonadota</taxon>
        <taxon>Gammaproteobacteria</taxon>
        <taxon>Pseudomonadales</taxon>
        <taxon>Pseudomonadaceae</taxon>
        <taxon>Pseudomonas</taxon>
    </lineage>
</organism>
<accession>A5WAY8</accession>
<reference key="1">
    <citation type="submission" date="2007-05" db="EMBL/GenBank/DDBJ databases">
        <title>Complete sequence of Pseudomonas putida F1.</title>
        <authorList>
            <consortium name="US DOE Joint Genome Institute"/>
            <person name="Copeland A."/>
            <person name="Lucas S."/>
            <person name="Lapidus A."/>
            <person name="Barry K."/>
            <person name="Detter J.C."/>
            <person name="Glavina del Rio T."/>
            <person name="Hammon N."/>
            <person name="Israni S."/>
            <person name="Dalin E."/>
            <person name="Tice H."/>
            <person name="Pitluck S."/>
            <person name="Chain P."/>
            <person name="Malfatti S."/>
            <person name="Shin M."/>
            <person name="Vergez L."/>
            <person name="Schmutz J."/>
            <person name="Larimer F."/>
            <person name="Land M."/>
            <person name="Hauser L."/>
            <person name="Kyrpides N."/>
            <person name="Lykidis A."/>
            <person name="Parales R."/>
            <person name="Richardson P."/>
        </authorList>
    </citation>
    <scope>NUCLEOTIDE SEQUENCE [LARGE SCALE GENOMIC DNA]</scope>
    <source>
        <strain>ATCC 700007 / DSM 6899 / JCM 31910 / BCRC 17059 / LMG 24140 / F1</strain>
    </source>
</reference>
<protein>
    <recommendedName>
        <fullName evidence="1">D-amino acid dehydrogenase</fullName>
        <ecNumber evidence="1">1.4.99.-</ecNumber>
    </recommendedName>
</protein>
<gene>
    <name evidence="1" type="primary">dadA</name>
    <name type="ordered locus">Pput_5180</name>
</gene>
<feature type="chain" id="PRO_1000066107" description="D-amino acid dehydrogenase">
    <location>
        <begin position="1"/>
        <end position="434"/>
    </location>
</feature>
<feature type="binding site" evidence="1">
    <location>
        <begin position="3"/>
        <end position="17"/>
    </location>
    <ligand>
        <name>FAD</name>
        <dbReference type="ChEBI" id="CHEBI:57692"/>
    </ligand>
</feature>
<proteinExistence type="inferred from homology"/>
<dbReference type="EC" id="1.4.99.-" evidence="1"/>
<dbReference type="EMBL" id="CP000712">
    <property type="protein sequence ID" value="ABQ81298.1"/>
    <property type="molecule type" value="Genomic_DNA"/>
</dbReference>
<dbReference type="SMR" id="A5WAY8"/>
<dbReference type="KEGG" id="ppf:Pput_5180"/>
<dbReference type="eggNOG" id="COG0665">
    <property type="taxonomic scope" value="Bacteria"/>
</dbReference>
<dbReference type="HOGENOM" id="CLU_007884_9_2_6"/>
<dbReference type="UniPathway" id="UPA00043">
    <property type="reaction ID" value="UER00498"/>
</dbReference>
<dbReference type="GO" id="GO:0005737">
    <property type="term" value="C:cytoplasm"/>
    <property type="evidence" value="ECO:0007669"/>
    <property type="project" value="TreeGrafter"/>
</dbReference>
<dbReference type="GO" id="GO:0005886">
    <property type="term" value="C:plasma membrane"/>
    <property type="evidence" value="ECO:0007669"/>
    <property type="project" value="TreeGrafter"/>
</dbReference>
<dbReference type="GO" id="GO:0008718">
    <property type="term" value="F:D-amino-acid dehydrogenase activity"/>
    <property type="evidence" value="ECO:0007669"/>
    <property type="project" value="UniProtKB-UniRule"/>
</dbReference>
<dbReference type="GO" id="GO:0055130">
    <property type="term" value="P:D-alanine catabolic process"/>
    <property type="evidence" value="ECO:0007669"/>
    <property type="project" value="UniProtKB-UniPathway"/>
</dbReference>
<dbReference type="FunFam" id="3.50.50.60:FF:000020">
    <property type="entry name" value="D-amino acid dehydrogenase"/>
    <property type="match status" value="1"/>
</dbReference>
<dbReference type="Gene3D" id="3.30.9.10">
    <property type="entry name" value="D-Amino Acid Oxidase, subunit A, domain 2"/>
    <property type="match status" value="1"/>
</dbReference>
<dbReference type="Gene3D" id="3.50.50.60">
    <property type="entry name" value="FAD/NAD(P)-binding domain"/>
    <property type="match status" value="2"/>
</dbReference>
<dbReference type="HAMAP" id="MF_01202">
    <property type="entry name" value="DadA"/>
    <property type="match status" value="1"/>
</dbReference>
<dbReference type="InterPro" id="IPR023080">
    <property type="entry name" value="DadA"/>
</dbReference>
<dbReference type="InterPro" id="IPR006076">
    <property type="entry name" value="FAD-dep_OxRdtase"/>
</dbReference>
<dbReference type="InterPro" id="IPR036188">
    <property type="entry name" value="FAD/NAD-bd_sf"/>
</dbReference>
<dbReference type="NCBIfam" id="NF001933">
    <property type="entry name" value="PRK00711.1"/>
    <property type="match status" value="1"/>
</dbReference>
<dbReference type="PANTHER" id="PTHR13847:SF280">
    <property type="entry name" value="D-AMINO ACID DEHYDROGENASE"/>
    <property type="match status" value="1"/>
</dbReference>
<dbReference type="PANTHER" id="PTHR13847">
    <property type="entry name" value="SARCOSINE DEHYDROGENASE-RELATED"/>
    <property type="match status" value="1"/>
</dbReference>
<dbReference type="Pfam" id="PF01266">
    <property type="entry name" value="DAO"/>
    <property type="match status" value="1"/>
</dbReference>
<dbReference type="SUPFAM" id="SSF54373">
    <property type="entry name" value="FAD-linked reductases, C-terminal domain"/>
    <property type="match status" value="1"/>
</dbReference>
<dbReference type="SUPFAM" id="SSF51905">
    <property type="entry name" value="FAD/NAD(P)-binding domain"/>
    <property type="match status" value="1"/>
</dbReference>
<keyword id="KW-0274">FAD</keyword>
<keyword id="KW-0285">Flavoprotein</keyword>
<keyword id="KW-0560">Oxidoreductase</keyword>
<comment type="function">
    <text evidence="1">Oxidative deamination of D-amino acids.</text>
</comment>
<comment type="catalytic activity">
    <reaction evidence="1">
        <text>a D-alpha-amino acid + A + H2O = a 2-oxocarboxylate + AH2 + NH4(+)</text>
        <dbReference type="Rhea" id="RHEA:18125"/>
        <dbReference type="ChEBI" id="CHEBI:13193"/>
        <dbReference type="ChEBI" id="CHEBI:15377"/>
        <dbReference type="ChEBI" id="CHEBI:17499"/>
        <dbReference type="ChEBI" id="CHEBI:28938"/>
        <dbReference type="ChEBI" id="CHEBI:35179"/>
        <dbReference type="ChEBI" id="CHEBI:59871"/>
    </reaction>
</comment>
<comment type="cofactor">
    <cofactor evidence="1">
        <name>FAD</name>
        <dbReference type="ChEBI" id="CHEBI:57692"/>
    </cofactor>
</comment>
<comment type="pathway">
    <text>Amino-acid degradation; D-alanine degradation; NH(3) and pyruvate from D-alanine: step 1/1.</text>
</comment>
<comment type="similarity">
    <text evidence="1">Belongs to the DadA oxidoreductase family.</text>
</comment>
<sequence length="434" mass="47369">MRVLVLGSGVIGTASAYYLARQGFEVTVVDRQPAVAMETSFANAGQISPGYASPWAAPGVPLKAIKWLLERHAPLAIKLTGDVDQYLWMAQMLRNCTASRYAVNKERMVRLSEYSRDCLDELRAETGINYENRSLGTTQLFRTQAQVDAAAKDIAVLEQSGVPYELLDRDGIARVEPALAGVKDILAGALRLPNDQTGDCQLFTTKLADMALKLGVEFRFGQDIQRLDFAGDRINGVWIDGKLETADRYVLALGSYSPQMLKPLGIKAPVYPLKGYSLTVPITNADMAPTSTILDETYKVAITRFDNRIRVGGMAEIAGFDLSLNPRRRETLEMIVNDLYPRGGDLSQASFWTGLRPATPDGTPIVGATGFRNLFLNTGHGTLGWTMACGSGRLLADLIARKKPQISAEGLDISRYGNSREVAKHGQSAPAHQQ</sequence>
<name>DADA_PSEP1</name>
<evidence type="ECO:0000255" key="1">
    <source>
        <dbReference type="HAMAP-Rule" id="MF_01202"/>
    </source>
</evidence>